<accession>P17699</accession>
<feature type="chain" id="PRO_0000149528" description="RNA-directed RNA polymerase">
    <location>
        <begin position="1"/>
        <end position="1088"/>
    </location>
</feature>
<feature type="domain" description="RdRp catalytic" evidence="2">
    <location>
        <begin position="501"/>
        <end position="687"/>
    </location>
</feature>
<protein>
    <recommendedName>
        <fullName>RNA-directed RNA polymerase</fullName>
        <ecNumber>2.7.7.48</ecNumber>
    </recommendedName>
    <alternativeName>
        <fullName>Protein VP1</fullName>
    </alternativeName>
</protein>
<keyword id="KW-0460">Magnesium</keyword>
<keyword id="KW-0547">Nucleotide-binding</keyword>
<keyword id="KW-0548">Nucleotidyltransferase</keyword>
<keyword id="KW-0694">RNA-binding</keyword>
<keyword id="KW-0696">RNA-directed RNA polymerase</keyword>
<keyword id="KW-0808">Transferase</keyword>
<keyword id="KW-0693">Viral RNA replication</keyword>
<keyword id="KW-0946">Virion</keyword>
<dbReference type="EC" id="2.7.7.48"/>
<dbReference type="EMBL" id="M32805">
    <property type="protein sequence ID" value="AAA43833.1"/>
    <property type="molecule type" value="Genomic_RNA"/>
</dbReference>
<dbReference type="PIR" id="A33749">
    <property type="entry name" value="P1XRPR"/>
</dbReference>
<dbReference type="SMR" id="P17699"/>
<dbReference type="GO" id="GO:0044423">
    <property type="term" value="C:virion component"/>
    <property type="evidence" value="ECO:0007669"/>
    <property type="project" value="UniProtKB-KW"/>
</dbReference>
<dbReference type="GO" id="GO:0000166">
    <property type="term" value="F:nucleotide binding"/>
    <property type="evidence" value="ECO:0007669"/>
    <property type="project" value="UniProtKB-KW"/>
</dbReference>
<dbReference type="GO" id="GO:0003723">
    <property type="term" value="F:RNA binding"/>
    <property type="evidence" value="ECO:0007669"/>
    <property type="project" value="UniProtKB-KW"/>
</dbReference>
<dbReference type="GO" id="GO:0003968">
    <property type="term" value="F:RNA-directed RNA polymerase activity"/>
    <property type="evidence" value="ECO:0007669"/>
    <property type="project" value="UniProtKB-KW"/>
</dbReference>
<dbReference type="GO" id="GO:0006351">
    <property type="term" value="P:DNA-templated transcription"/>
    <property type="evidence" value="ECO:0007669"/>
    <property type="project" value="InterPro"/>
</dbReference>
<dbReference type="GO" id="GO:0019079">
    <property type="term" value="P:viral genome replication"/>
    <property type="evidence" value="ECO:0007669"/>
    <property type="project" value="InterPro"/>
</dbReference>
<dbReference type="Gene3D" id="1.10.357.80">
    <property type="match status" value="2"/>
</dbReference>
<dbReference type="Gene3D" id="1.20.120.1390">
    <property type="match status" value="1"/>
</dbReference>
<dbReference type="Gene3D" id="3.30.230.140">
    <property type="match status" value="2"/>
</dbReference>
<dbReference type="Gene3D" id="3.30.70.2480">
    <property type="match status" value="1"/>
</dbReference>
<dbReference type="Gene3D" id="1.10.10.1990">
    <property type="entry name" value="Viral RNA-directed RNA polymerase, 4-helical domain"/>
    <property type="match status" value="1"/>
</dbReference>
<dbReference type="InterPro" id="IPR043502">
    <property type="entry name" value="DNA/RNA_pol_sf"/>
</dbReference>
<dbReference type="InterPro" id="IPR042032">
    <property type="entry name" value="RNA-dir_pol_4-hel_dom"/>
</dbReference>
<dbReference type="InterPro" id="IPR001795">
    <property type="entry name" value="RNA-dir_pol_luteovirus"/>
</dbReference>
<dbReference type="InterPro" id="IPR007097">
    <property type="entry name" value="RNA-dir_pol_reovirus"/>
</dbReference>
<dbReference type="InterPro" id="IPR022071">
    <property type="entry name" value="Rotavirus_VP1_C"/>
</dbReference>
<dbReference type="Pfam" id="PF02123">
    <property type="entry name" value="RdRP_4"/>
    <property type="match status" value="1"/>
</dbReference>
<dbReference type="Pfam" id="PF12289">
    <property type="entry name" value="Rotavirus_VP1"/>
    <property type="match status" value="1"/>
</dbReference>
<dbReference type="SUPFAM" id="SSF56672">
    <property type="entry name" value="DNA/RNA polymerases"/>
    <property type="match status" value="1"/>
</dbReference>
<dbReference type="PROSITE" id="PS50523">
    <property type="entry name" value="RDRP_DSRNA_REO"/>
    <property type="match status" value="1"/>
</dbReference>
<proteinExistence type="inferred from homology"/>
<comment type="function">
    <text evidence="2">RNA-directed RNA polymerase that is involved in both transcription and genome replication. Together with VP3 capping enzyme, forms an enzyme complex positioned near the channels situated at each of the five-fold vertices of the core. Following infection, the outermost layer of the virus is lost, leaving a double-layered particle (DLP) made up of the core and VP6 shell. VP1 then catalyzes the transcription of fully conservative plus-strand genomic RNAs that are extruded through the DLP's channels into the cytoplasm where they function as mRNAs for translation of viral proteins. One copy of each of the viral (+)RNAs is also recruited during core assembly, together with newly synthesized polymerase complexes and VP2. The polymerase of these novo-formed particles catalyzes the synthesis of complementary minus-strands leading to dsRNA formation. To do so, the polymerase specifically recognizes and binds 4 bases 5'-UGUG-3' in the conserved 3'-sequence of plus-strand RNA templates. VP2 presumably activates the autoinhibited VP1-RNA complex to coordinate packaging and genome replication. Once dsRNA synthesis is complete, the polymerase switches to the transcriptional mode, thus providing secondary transcription (By similarity).</text>
</comment>
<comment type="catalytic activity">
    <reaction evidence="2">
        <text>RNA(n) + a ribonucleoside 5'-triphosphate = RNA(n+1) + diphosphate</text>
        <dbReference type="Rhea" id="RHEA:21248"/>
        <dbReference type="Rhea" id="RHEA-COMP:14527"/>
        <dbReference type="Rhea" id="RHEA-COMP:17342"/>
        <dbReference type="ChEBI" id="CHEBI:33019"/>
        <dbReference type="ChEBI" id="CHEBI:61557"/>
        <dbReference type="ChEBI" id="CHEBI:140395"/>
        <dbReference type="EC" id="2.7.7.48"/>
    </reaction>
</comment>
<comment type="cofactor">
    <cofactor evidence="3">
        <name>Mg(2+)</name>
        <dbReference type="ChEBI" id="CHEBI:18420"/>
    </cofactor>
</comment>
<comment type="subunit">
    <text evidence="1 3">Interacts with VP3 (Potential). Interacts with VP2; this interaction activates VP1. Interacts with NSP5; this interaction is probably necessary for the formation of functional virus factories. Interacts with NSP2; this interaction is weak (By similarity).</text>
</comment>
<comment type="subcellular location">
    <subcellularLocation>
        <location evidence="3">Virion</location>
    </subcellularLocation>
    <text evidence="1">Attached inside the inner capsid as a minor component. Also found in spherical cytoplasmic structures, called virus factories, that appear early after infection and are the site of viral replication and packaging (By similarity).</text>
</comment>
<comment type="similarity">
    <text evidence="3">Belongs to the reoviridae RNA-directed RNA polymerase family.</text>
</comment>
<sequence>MGKYNLILSEYLSFVYNSQSAVQIPIYYSSNPELEKRCIDFHAKCVDNSKKGLSLKPLFEEYKDVIDNATLLSILSYSYDKYNAVERKLVNYAKGKPLEADLTANELDYENNKITSELFQSAKEYTYSLMDPAILTSLSSNLNAVMFWLERHSNDVADANKIYKRRLDLFTIVASTINKYGVPRHNEKYRYEYEVMKDKPYYLVTWANSAIEMLMSVFSHEDYLIAKELMVLSCSNRSTLAKLVSSPMSILVALIDINGTFITNEEFDLEFSDKYVRAIVPDQTFDELQEMIDNMKKAGLVDIPRMIQEWLVDCSLEKFTLMSKIYSWSFHVGFRKQKMIDAALDQLKTEYTEDVDNEMYNEYTMLIRDEIVKMLEVPVKHDDHLLRNSELAGLLSMSSASNGASRQLKFGRKTIFSTKKNMHVMDDIARGRYTPGVIPPVNVDRPIPLGRRDVPGRRTRIIFILPYEYFIAQHAVVEKMLSYAKHTREYAEFYSQSNQLLSYGDVTRFLSSNSMVLYTDVSQWDSSQHNTQPFRKGIIMGLDMLANMTNDPKVVQTLNLYKQTQINLMDSYVQIPDGDVIKKIQYGAVASGEKQTKAANSIANLALIKTVLSRIANKYSFITKIIRVDGDDNYAVLQFNTDVTKQMVQEVSNDVRYIYSRMNAKVKALVSTVGIEIAKRYIAGGKIFFRAGINLLNNEKRGQSTQWDQAAILYSNYIVNKLRGFETDREFILTKIIQMTSVAITGSLRLFPSERVLTTNSTFKVFDSEDFIIEYGTTDDEVYIQRAFMSLSSQKSGIADEIASSQTFKNYVSKLSDQLLVSKNAIVSKGIAVTEKAKLNSYAPVYLEKRRAQISALLTMLQKPVSFKSNKITINDILRDIKPFFVTTEASLPIQYRKFMPTLPDNVQYVIQCIGSRTYQIEDSGSKSSISKLISKYSVYKPSIEELYRVISLREQEIQLYLVSLGVPPVDASTYVGSRIYSQDKYKILESYVYNLLSINYGCYQLFDFNSPDLEKLIRIPFKGKIPAVTFILHLYAKLEIINYAIKNKSWISLFCNYPKSEMIKLWKKMWNITAFRSPYTSANFFED</sequence>
<organism>
    <name type="scientific">Rotavirus A (strain RVA/Pig/United States/Gottfried/1983/G4P2B[6])</name>
    <name type="common">RV-A</name>
    <dbReference type="NCBI Taxonomy" id="10917"/>
    <lineage>
        <taxon>Viruses</taxon>
        <taxon>Riboviria</taxon>
        <taxon>Orthornavirae</taxon>
        <taxon>Duplornaviricota</taxon>
        <taxon>Resentoviricetes</taxon>
        <taxon>Reovirales</taxon>
        <taxon>Sedoreoviridae</taxon>
        <taxon>Rotavirus</taxon>
        <taxon>Rotavirus A</taxon>
    </lineage>
</organism>
<organismHost>
    <name type="scientific">Sus scrofa</name>
    <name type="common">Pig</name>
    <dbReference type="NCBI Taxonomy" id="9823"/>
</organismHost>
<evidence type="ECO:0000250" key="1"/>
<evidence type="ECO:0000255" key="2">
    <source>
        <dbReference type="PROSITE-ProRule" id="PRU00539"/>
    </source>
</evidence>
<evidence type="ECO:0000305" key="3"/>
<reference key="1">
    <citation type="journal article" date="1989" name="Virology">
        <title>Nucleotide sequence of gene segment 1 of a porcine rotavirus strain.</title>
        <authorList>
            <person name="Fukuhara N."/>
            <person name="Nishikawa K."/>
            <person name="Gorziglia M."/>
            <person name="Kapikian A.Z."/>
        </authorList>
    </citation>
    <scope>NUCLEOTIDE SEQUENCE [GENOMIC RNA]</scope>
</reference>
<name>RDRP_ROTPG</name>